<proteinExistence type="inferred from homology"/>
<name>PURP1_METMA</name>
<reference key="1">
    <citation type="journal article" date="2002" name="J. Mol. Microbiol. Biotechnol.">
        <title>The genome of Methanosarcina mazei: evidence for lateral gene transfer between Bacteria and Archaea.</title>
        <authorList>
            <person name="Deppenmeier U."/>
            <person name="Johann A."/>
            <person name="Hartsch T."/>
            <person name="Merkl R."/>
            <person name="Schmitz R.A."/>
            <person name="Martinez-Arias R."/>
            <person name="Henne A."/>
            <person name="Wiezer A."/>
            <person name="Baeumer S."/>
            <person name="Jacobi C."/>
            <person name="Brueggemann H."/>
            <person name="Lienard T."/>
            <person name="Christmann A."/>
            <person name="Boemecke M."/>
            <person name="Steckel S."/>
            <person name="Bhattacharyya A."/>
            <person name="Lykidis A."/>
            <person name="Overbeek R."/>
            <person name="Klenk H.-P."/>
            <person name="Gunsalus R.P."/>
            <person name="Fritz H.-J."/>
            <person name="Gottschalk G."/>
        </authorList>
    </citation>
    <scope>NUCLEOTIDE SEQUENCE [LARGE SCALE GENOMIC DNA]</scope>
    <source>
        <strain>ATCC BAA-159 / DSM 3647 / Goe1 / Go1 / JCM 11833 / OCM 88</strain>
    </source>
</reference>
<comment type="function">
    <text evidence="2">Catalyzes the ATP- and formate-dependent formylation of 5-aminoimidazole-4-carboxamide-1-beta-d-ribofuranosyl 5'-monophosphate (AICAR) to 5-formaminoimidazole-4-carboxamide-1-beta-d-ribofuranosyl 5'-monophosphate (FAICAR) in the absence of folates.</text>
</comment>
<comment type="catalytic activity">
    <reaction evidence="2">
        <text>5-amino-1-(5-phospho-beta-D-ribosyl)imidazole-4-carboxamide + formate + ATP = 5-formamido-1-(5-phospho-D-ribosyl)imidazole-4-carboxamide + ADP + phosphate</text>
        <dbReference type="Rhea" id="RHEA:24836"/>
        <dbReference type="ChEBI" id="CHEBI:15740"/>
        <dbReference type="ChEBI" id="CHEBI:30616"/>
        <dbReference type="ChEBI" id="CHEBI:43474"/>
        <dbReference type="ChEBI" id="CHEBI:58467"/>
        <dbReference type="ChEBI" id="CHEBI:58475"/>
        <dbReference type="ChEBI" id="CHEBI:456216"/>
        <dbReference type="EC" id="6.3.4.23"/>
    </reaction>
</comment>
<comment type="cofactor">
    <cofactor evidence="1">
        <name>Mg(2+)</name>
        <dbReference type="ChEBI" id="CHEBI:18420"/>
    </cofactor>
    <cofactor evidence="1">
        <name>Mn(2+)</name>
        <dbReference type="ChEBI" id="CHEBI:29035"/>
    </cofactor>
    <text evidence="1">Binds 1 Mg(2+) or Mn(2+) ion per subunit.</text>
</comment>
<comment type="pathway">
    <text evidence="2">Purine metabolism; IMP biosynthesis via de novo pathway; 5-formamido-1-(5-phospho-D-ribosyl)imidazole-4-carboxamide from 5-amino-1-(5-phospho-D-ribosyl)imidazole-4-carboxamide (formate route): step 1/1.</text>
</comment>
<comment type="similarity">
    <text evidence="2">Belongs to the phosphohexose mutase family.</text>
</comment>
<evidence type="ECO:0000250" key="1"/>
<evidence type="ECO:0000255" key="2">
    <source>
        <dbReference type="HAMAP-Rule" id="MF_01163"/>
    </source>
</evidence>
<accession>Q8PWT3</accession>
<organism>
    <name type="scientific">Methanosarcina mazei (strain ATCC BAA-159 / DSM 3647 / Goe1 / Go1 / JCM 11833 / OCM 88)</name>
    <name type="common">Methanosarcina frisia</name>
    <dbReference type="NCBI Taxonomy" id="192952"/>
    <lineage>
        <taxon>Archaea</taxon>
        <taxon>Methanobacteriati</taxon>
        <taxon>Methanobacteriota</taxon>
        <taxon>Stenosarchaea group</taxon>
        <taxon>Methanomicrobia</taxon>
        <taxon>Methanosarcinales</taxon>
        <taxon>Methanosarcinaceae</taxon>
        <taxon>Methanosarcina</taxon>
    </lineage>
</organism>
<protein>
    <recommendedName>
        <fullName evidence="2">5-formaminoimidazole-4-carboxamide-1-(beta)-D-ribofuranosyl 5'-monophosphate synthetase 1</fullName>
        <ecNumber evidence="2">6.3.4.23</ecNumber>
    </recommendedName>
    <alternativeName>
        <fullName evidence="2">5-aminoimidazole-4-carboxamide-1-beta-D-ribofuranosyl 5'-monophosphate--formate ligase 1</fullName>
    </alternativeName>
</protein>
<feature type="chain" id="PRO_0000348627" description="5-formaminoimidazole-4-carboxamide-1-(beta)-D-ribofuranosyl 5'-monophosphate synthetase 1">
    <location>
        <begin position="1"/>
        <end position="356"/>
    </location>
</feature>
<feature type="domain" description="ATP-grasp" evidence="2">
    <location>
        <begin position="101"/>
        <end position="333"/>
    </location>
</feature>
<feature type="binding site" evidence="2">
    <location>
        <position position="27"/>
    </location>
    <ligand>
        <name>5-amino-1-(5-phospho-beta-D-ribosyl)imidazole-4-carboxamide</name>
        <dbReference type="ChEBI" id="CHEBI:58475"/>
    </ligand>
</feature>
<feature type="binding site" evidence="2">
    <location>
        <position position="94"/>
    </location>
    <ligand>
        <name>5-amino-1-(5-phospho-beta-D-ribosyl)imidazole-4-carboxamide</name>
        <dbReference type="ChEBI" id="CHEBI:58475"/>
    </ligand>
</feature>
<feature type="binding site" evidence="2">
    <location>
        <begin position="145"/>
        <end position="196"/>
    </location>
    <ligand>
        <name>ATP</name>
        <dbReference type="ChEBI" id="CHEBI:30616"/>
    </ligand>
</feature>
<feature type="binding site" evidence="2">
    <location>
        <position position="226"/>
    </location>
    <ligand>
        <name>ATP</name>
        <dbReference type="ChEBI" id="CHEBI:30616"/>
    </ligand>
</feature>
<feature type="binding site" evidence="2">
    <location>
        <position position="255"/>
    </location>
    <ligand>
        <name>5-amino-1-(5-phospho-beta-D-ribosyl)imidazole-4-carboxamide</name>
        <dbReference type="ChEBI" id="CHEBI:58475"/>
    </ligand>
</feature>
<feature type="binding site" evidence="2">
    <location>
        <position position="293"/>
    </location>
    <ligand>
        <name>Mg(2+)</name>
        <dbReference type="ChEBI" id="CHEBI:18420"/>
    </ligand>
</feature>
<feature type="binding site" evidence="2">
    <location>
        <position position="306"/>
    </location>
    <ligand>
        <name>Mg(2+)</name>
        <dbReference type="ChEBI" id="CHEBI:18420"/>
    </ligand>
</feature>
<dbReference type="EC" id="6.3.4.23" evidence="2"/>
<dbReference type="EMBL" id="AE008384">
    <property type="protein sequence ID" value="AAM31189.1"/>
    <property type="molecule type" value="Genomic_DNA"/>
</dbReference>
<dbReference type="RefSeq" id="WP_011033439.1">
    <property type="nucleotide sequence ID" value="NC_003901.1"/>
</dbReference>
<dbReference type="SMR" id="Q8PWT3"/>
<dbReference type="KEGG" id="mma:MM_1493"/>
<dbReference type="PATRIC" id="fig|192952.21.peg.1725"/>
<dbReference type="eggNOG" id="arCOG04346">
    <property type="taxonomic scope" value="Archaea"/>
</dbReference>
<dbReference type="HOGENOM" id="CLU_065084_0_0_2"/>
<dbReference type="UniPathway" id="UPA00074">
    <property type="reaction ID" value="UER00134"/>
</dbReference>
<dbReference type="Proteomes" id="UP000000595">
    <property type="component" value="Chromosome"/>
</dbReference>
<dbReference type="GO" id="GO:0005524">
    <property type="term" value="F:ATP binding"/>
    <property type="evidence" value="ECO:0007669"/>
    <property type="project" value="UniProtKB-KW"/>
</dbReference>
<dbReference type="GO" id="GO:0016879">
    <property type="term" value="F:ligase activity, forming carbon-nitrogen bonds"/>
    <property type="evidence" value="ECO:0007669"/>
    <property type="project" value="UniProtKB-UniRule"/>
</dbReference>
<dbReference type="GO" id="GO:0000287">
    <property type="term" value="F:magnesium ion binding"/>
    <property type="evidence" value="ECO:0007669"/>
    <property type="project" value="InterPro"/>
</dbReference>
<dbReference type="GO" id="GO:0006189">
    <property type="term" value="P:'de novo' IMP biosynthetic process"/>
    <property type="evidence" value="ECO:0007669"/>
    <property type="project" value="UniProtKB-UniRule"/>
</dbReference>
<dbReference type="Gene3D" id="3.40.50.20">
    <property type="match status" value="1"/>
</dbReference>
<dbReference type="Gene3D" id="3.30.1490.20">
    <property type="entry name" value="ATP-grasp fold, A domain"/>
    <property type="match status" value="1"/>
</dbReference>
<dbReference type="Gene3D" id="3.30.470.20">
    <property type="entry name" value="ATP-grasp fold, B domain"/>
    <property type="match status" value="1"/>
</dbReference>
<dbReference type="HAMAP" id="MF_01163">
    <property type="entry name" value="IMP_biosynth_PurP"/>
    <property type="match status" value="1"/>
</dbReference>
<dbReference type="InterPro" id="IPR011761">
    <property type="entry name" value="ATP-grasp"/>
</dbReference>
<dbReference type="InterPro" id="IPR013815">
    <property type="entry name" value="ATP_grasp_subdomain_1"/>
</dbReference>
<dbReference type="InterPro" id="IPR023656">
    <property type="entry name" value="IMP_biosynth_PurP"/>
</dbReference>
<dbReference type="InterPro" id="IPR009720">
    <property type="entry name" value="IMP_biosynth_PurP_C"/>
</dbReference>
<dbReference type="InterPro" id="IPR010672">
    <property type="entry name" value="IMP_biosynth_PurP_N"/>
</dbReference>
<dbReference type="InterPro" id="IPR016185">
    <property type="entry name" value="PreATP-grasp_dom_sf"/>
</dbReference>
<dbReference type="NCBIfam" id="NF009781">
    <property type="entry name" value="PRK13278.1-6"/>
    <property type="match status" value="1"/>
</dbReference>
<dbReference type="PANTHER" id="PTHR38147:SF2">
    <property type="entry name" value="5-FORMAMINOIMIDAZOLE-4-CARBOXAMIDE-1-(BETA)-D-RIBOFURANOSYL 5'-MONOPHOSPHATE SYNTHETASE"/>
    <property type="match status" value="1"/>
</dbReference>
<dbReference type="PANTHER" id="PTHR38147">
    <property type="entry name" value="5-FORMAMINOIMIDAZOLE-4-CARBOXAMIDE-1-(BETA)-D-RIBOFURANOSYL 5'-MONOPHOSPHATE SYNTHETASE-RELATED"/>
    <property type="match status" value="1"/>
</dbReference>
<dbReference type="Pfam" id="PF06849">
    <property type="entry name" value="DUF1246"/>
    <property type="match status" value="1"/>
</dbReference>
<dbReference type="Pfam" id="PF06973">
    <property type="entry name" value="DUF1297"/>
    <property type="match status" value="1"/>
</dbReference>
<dbReference type="PIRSF" id="PIRSF004602">
    <property type="entry name" value="ATPgrasp_PurP"/>
    <property type="match status" value="1"/>
</dbReference>
<dbReference type="SUPFAM" id="SSF56059">
    <property type="entry name" value="Glutathione synthetase ATP-binding domain-like"/>
    <property type="match status" value="1"/>
</dbReference>
<dbReference type="SUPFAM" id="SSF52440">
    <property type="entry name" value="PreATP-grasp domain"/>
    <property type="match status" value="1"/>
</dbReference>
<dbReference type="PROSITE" id="PS50975">
    <property type="entry name" value="ATP_GRASP"/>
    <property type="match status" value="1"/>
</dbReference>
<keyword id="KW-0067">ATP-binding</keyword>
<keyword id="KW-0436">Ligase</keyword>
<keyword id="KW-0460">Magnesium</keyword>
<keyword id="KW-0464">Manganese</keyword>
<keyword id="KW-0479">Metal-binding</keyword>
<keyword id="KW-0547">Nucleotide-binding</keyword>
<keyword id="KW-0658">Purine biosynthesis</keyword>
<sequence>MITKQQVLEFLKNYDLDNITIATVCSHSSLQIFDGARKEGFRTMGICVGKPPKFYEAFPRAKPDEYLIVESYEDIMNKVEELRKKNVIIIPHGSFVAYLGTENFAEMAVPTFGNRAVLEWESDRSKEREWLLGAGIHMPGKIDDPRDINGPVMVKYDGAKGGKGFFVAKTYEEFDELVDRTQKYTIQEFITGTRYYLHYFYSPIRNEGYTLSEGSLELLSMDRRVESNADEIFRLGSPRELIEAGIRPTYVVTGNVPLVARESLLPLIFSLGERVVEESLGLFGGMIGAFCLETVFTDELEIKVFEISARIVAGTNLYISGSPYADLIQEDLSTGRRIAQEIKEAVRKNQLDKIIS</sequence>
<gene>
    <name evidence="2" type="primary">purP1</name>
    <name type="ordered locus">MM_1493</name>
</gene>